<reference key="1">
    <citation type="journal article" date="1999" name="Nature">
        <title>Sequence and analysis of chromosome 4 of the plant Arabidopsis thaliana.</title>
        <authorList>
            <person name="Mayer K.F.X."/>
            <person name="Schueller C."/>
            <person name="Wambutt R."/>
            <person name="Murphy G."/>
            <person name="Volckaert G."/>
            <person name="Pohl T."/>
            <person name="Duesterhoeft A."/>
            <person name="Stiekema W."/>
            <person name="Entian K.-D."/>
            <person name="Terryn N."/>
            <person name="Harris B."/>
            <person name="Ansorge W."/>
            <person name="Brandt P."/>
            <person name="Grivell L.A."/>
            <person name="Rieger M."/>
            <person name="Weichselgartner M."/>
            <person name="de Simone V."/>
            <person name="Obermaier B."/>
            <person name="Mache R."/>
            <person name="Mueller M."/>
            <person name="Kreis M."/>
            <person name="Delseny M."/>
            <person name="Puigdomenech P."/>
            <person name="Watson M."/>
            <person name="Schmidtheini T."/>
            <person name="Reichert B."/>
            <person name="Portetelle D."/>
            <person name="Perez-Alonso M."/>
            <person name="Boutry M."/>
            <person name="Bancroft I."/>
            <person name="Vos P."/>
            <person name="Hoheisel J."/>
            <person name="Zimmermann W."/>
            <person name="Wedler H."/>
            <person name="Ridley P."/>
            <person name="Langham S.-A."/>
            <person name="McCullagh B."/>
            <person name="Bilham L."/>
            <person name="Robben J."/>
            <person name="van der Schueren J."/>
            <person name="Grymonprez B."/>
            <person name="Chuang Y.-J."/>
            <person name="Vandenbussche F."/>
            <person name="Braeken M."/>
            <person name="Weltjens I."/>
            <person name="Voet M."/>
            <person name="Bastiaens I."/>
            <person name="Aert R."/>
            <person name="Defoor E."/>
            <person name="Weitzenegger T."/>
            <person name="Bothe G."/>
            <person name="Ramsperger U."/>
            <person name="Hilbert H."/>
            <person name="Braun M."/>
            <person name="Holzer E."/>
            <person name="Brandt A."/>
            <person name="Peters S."/>
            <person name="van Staveren M."/>
            <person name="Dirkse W."/>
            <person name="Mooijman P."/>
            <person name="Klein Lankhorst R."/>
            <person name="Rose M."/>
            <person name="Hauf J."/>
            <person name="Koetter P."/>
            <person name="Berneiser S."/>
            <person name="Hempel S."/>
            <person name="Feldpausch M."/>
            <person name="Lamberth S."/>
            <person name="Van den Daele H."/>
            <person name="De Keyser A."/>
            <person name="Buysshaert C."/>
            <person name="Gielen J."/>
            <person name="Villarroel R."/>
            <person name="De Clercq R."/>
            <person name="van Montagu M."/>
            <person name="Rogers J."/>
            <person name="Cronin A."/>
            <person name="Quail M.A."/>
            <person name="Bray-Allen S."/>
            <person name="Clark L."/>
            <person name="Doggett J."/>
            <person name="Hall S."/>
            <person name="Kay M."/>
            <person name="Lennard N."/>
            <person name="McLay K."/>
            <person name="Mayes R."/>
            <person name="Pettett A."/>
            <person name="Rajandream M.A."/>
            <person name="Lyne M."/>
            <person name="Benes V."/>
            <person name="Rechmann S."/>
            <person name="Borkova D."/>
            <person name="Bloecker H."/>
            <person name="Scharfe M."/>
            <person name="Grimm M."/>
            <person name="Loehnert T.-H."/>
            <person name="Dose S."/>
            <person name="de Haan M."/>
            <person name="Maarse A.C."/>
            <person name="Schaefer M."/>
            <person name="Mueller-Auer S."/>
            <person name="Gabel C."/>
            <person name="Fuchs M."/>
            <person name="Fartmann B."/>
            <person name="Granderath K."/>
            <person name="Dauner D."/>
            <person name="Herzl A."/>
            <person name="Neumann S."/>
            <person name="Argiriou A."/>
            <person name="Vitale D."/>
            <person name="Liguori R."/>
            <person name="Piravandi E."/>
            <person name="Massenet O."/>
            <person name="Quigley F."/>
            <person name="Clabauld G."/>
            <person name="Muendlein A."/>
            <person name="Felber R."/>
            <person name="Schnabl S."/>
            <person name="Hiller R."/>
            <person name="Schmidt W."/>
            <person name="Lecharny A."/>
            <person name="Aubourg S."/>
            <person name="Chefdor F."/>
            <person name="Cooke R."/>
            <person name="Berger C."/>
            <person name="Monfort A."/>
            <person name="Casacuberta E."/>
            <person name="Gibbons T."/>
            <person name="Weber N."/>
            <person name="Vandenbol M."/>
            <person name="Bargues M."/>
            <person name="Terol J."/>
            <person name="Torres A."/>
            <person name="Perez-Perez A."/>
            <person name="Purnelle B."/>
            <person name="Bent E."/>
            <person name="Johnson S."/>
            <person name="Tacon D."/>
            <person name="Jesse T."/>
            <person name="Heijnen L."/>
            <person name="Schwarz S."/>
            <person name="Scholler P."/>
            <person name="Heber S."/>
            <person name="Francs P."/>
            <person name="Bielke C."/>
            <person name="Frishman D."/>
            <person name="Haase D."/>
            <person name="Lemcke K."/>
            <person name="Mewes H.-W."/>
            <person name="Stocker S."/>
            <person name="Zaccaria P."/>
            <person name="Bevan M."/>
            <person name="Wilson R.K."/>
            <person name="de la Bastide M."/>
            <person name="Habermann K."/>
            <person name="Parnell L."/>
            <person name="Dedhia N."/>
            <person name="Gnoj L."/>
            <person name="Schutz K."/>
            <person name="Huang E."/>
            <person name="Spiegel L."/>
            <person name="Sekhon M."/>
            <person name="Murray J."/>
            <person name="Sheet P."/>
            <person name="Cordes M."/>
            <person name="Abu-Threideh J."/>
            <person name="Stoneking T."/>
            <person name="Kalicki J."/>
            <person name="Graves T."/>
            <person name="Harmon G."/>
            <person name="Edwards J."/>
            <person name="Latreille P."/>
            <person name="Courtney L."/>
            <person name="Cloud J."/>
            <person name="Abbott A."/>
            <person name="Scott K."/>
            <person name="Johnson D."/>
            <person name="Minx P."/>
            <person name="Bentley D."/>
            <person name="Fulton B."/>
            <person name="Miller N."/>
            <person name="Greco T."/>
            <person name="Kemp K."/>
            <person name="Kramer J."/>
            <person name="Fulton L."/>
            <person name="Mardis E."/>
            <person name="Dante M."/>
            <person name="Pepin K."/>
            <person name="Hillier L.W."/>
            <person name="Nelson J."/>
            <person name="Spieth J."/>
            <person name="Ryan E."/>
            <person name="Andrews S."/>
            <person name="Geisel C."/>
            <person name="Layman D."/>
            <person name="Du H."/>
            <person name="Ali J."/>
            <person name="Berghoff A."/>
            <person name="Jones K."/>
            <person name="Drone K."/>
            <person name="Cotton M."/>
            <person name="Joshu C."/>
            <person name="Antonoiu B."/>
            <person name="Zidanic M."/>
            <person name="Strong C."/>
            <person name="Sun H."/>
            <person name="Lamar B."/>
            <person name="Yordan C."/>
            <person name="Ma P."/>
            <person name="Zhong J."/>
            <person name="Preston R."/>
            <person name="Vil D."/>
            <person name="Shekher M."/>
            <person name="Matero A."/>
            <person name="Shah R."/>
            <person name="Swaby I.K."/>
            <person name="O'Shaughnessy A."/>
            <person name="Rodriguez M."/>
            <person name="Hoffman J."/>
            <person name="Till S."/>
            <person name="Granat S."/>
            <person name="Shohdy N."/>
            <person name="Hasegawa A."/>
            <person name="Hameed A."/>
            <person name="Lodhi M."/>
            <person name="Johnson A."/>
            <person name="Chen E."/>
            <person name="Marra M.A."/>
            <person name="Martienssen R."/>
            <person name="McCombie W.R."/>
        </authorList>
    </citation>
    <scope>NUCLEOTIDE SEQUENCE [LARGE SCALE GENOMIC DNA]</scope>
    <source>
        <strain>cv. Columbia</strain>
    </source>
</reference>
<reference key="2">
    <citation type="journal article" date="2017" name="Plant J.">
        <title>Araport11: a complete reannotation of the Arabidopsis thaliana reference genome.</title>
        <authorList>
            <person name="Cheng C.Y."/>
            <person name="Krishnakumar V."/>
            <person name="Chan A.P."/>
            <person name="Thibaud-Nissen F."/>
            <person name="Schobel S."/>
            <person name="Town C.D."/>
        </authorList>
    </citation>
    <scope>GENOME REANNOTATION</scope>
    <source>
        <strain>cv. Columbia</strain>
    </source>
</reference>
<reference key="3">
    <citation type="journal article" date="2004" name="Genome Res.">
        <title>Whole genome sequence comparisons and 'full-length' cDNA sequences: a combined approach to evaluate and improve Arabidopsis genome annotation.</title>
        <authorList>
            <person name="Castelli V."/>
            <person name="Aury J.-M."/>
            <person name="Jaillon O."/>
            <person name="Wincker P."/>
            <person name="Clepet C."/>
            <person name="Menard M."/>
            <person name="Cruaud C."/>
            <person name="Quetier F."/>
            <person name="Scarpelli C."/>
            <person name="Schaechter V."/>
            <person name="Temple G."/>
            <person name="Caboche M."/>
            <person name="Weissenbach J."/>
            <person name="Salanoubat M."/>
        </authorList>
    </citation>
    <scope>NUCLEOTIDE SEQUENCE [LARGE SCALE MRNA]</scope>
    <source>
        <strain>cv. Columbia</strain>
    </source>
</reference>
<reference key="4">
    <citation type="journal article" date="2003" name="Science">
        <title>Empirical analysis of transcriptional activity in the Arabidopsis genome.</title>
        <authorList>
            <person name="Yamada K."/>
            <person name="Lim J."/>
            <person name="Dale J.M."/>
            <person name="Chen H."/>
            <person name="Shinn P."/>
            <person name="Palm C.J."/>
            <person name="Southwick A.M."/>
            <person name="Wu H.C."/>
            <person name="Kim C.J."/>
            <person name="Nguyen M."/>
            <person name="Pham P.K."/>
            <person name="Cheuk R.F."/>
            <person name="Karlin-Newmann G."/>
            <person name="Liu S.X."/>
            <person name="Lam B."/>
            <person name="Sakano H."/>
            <person name="Wu T."/>
            <person name="Yu G."/>
            <person name="Miranda M."/>
            <person name="Quach H.L."/>
            <person name="Tripp M."/>
            <person name="Chang C.H."/>
            <person name="Lee J.M."/>
            <person name="Toriumi M.J."/>
            <person name="Chan M.M."/>
            <person name="Tang C.C."/>
            <person name="Onodera C.S."/>
            <person name="Deng J.M."/>
            <person name="Akiyama K."/>
            <person name="Ansari Y."/>
            <person name="Arakawa T."/>
            <person name="Banh J."/>
            <person name="Banno F."/>
            <person name="Bowser L."/>
            <person name="Brooks S.Y."/>
            <person name="Carninci P."/>
            <person name="Chao Q."/>
            <person name="Choy N."/>
            <person name="Enju A."/>
            <person name="Goldsmith A.D."/>
            <person name="Gurjal M."/>
            <person name="Hansen N.F."/>
            <person name="Hayashizaki Y."/>
            <person name="Johnson-Hopson C."/>
            <person name="Hsuan V.W."/>
            <person name="Iida K."/>
            <person name="Karnes M."/>
            <person name="Khan S."/>
            <person name="Koesema E."/>
            <person name="Ishida J."/>
            <person name="Jiang P.X."/>
            <person name="Jones T."/>
            <person name="Kawai J."/>
            <person name="Kamiya A."/>
            <person name="Meyers C."/>
            <person name="Nakajima M."/>
            <person name="Narusaka M."/>
            <person name="Seki M."/>
            <person name="Sakurai T."/>
            <person name="Satou M."/>
            <person name="Tamse R."/>
            <person name="Vaysberg M."/>
            <person name="Wallender E.K."/>
            <person name="Wong C."/>
            <person name="Yamamura Y."/>
            <person name="Yuan S."/>
            <person name="Shinozaki K."/>
            <person name="Davis R.W."/>
            <person name="Theologis A."/>
            <person name="Ecker J.R."/>
        </authorList>
    </citation>
    <scope>NUCLEOTIDE SEQUENCE [LARGE SCALE MRNA] OF 296-541 AND 384-541</scope>
    <source>
        <strain>cv. Columbia</strain>
    </source>
</reference>
<reference key="5">
    <citation type="journal article" date="2011" name="Plant J.">
        <title>Arabidopsis RUGOSA2 encodes an mTERF family member required for mitochondrion, chloroplast and leaf development.</title>
        <authorList>
            <person name="Quesada V."/>
            <person name="Sarmiento-Manus R."/>
            <person name="Gonzalez-Bayon R."/>
            <person name="Hricova A."/>
            <person name="Perez-Marcos R."/>
            <person name="Gracia-Martinez E."/>
            <person name="Medina-Ruiz L."/>
            <person name="Leyva-Diaz E."/>
            <person name="Ponce M.R."/>
            <person name="Micol J.L."/>
        </authorList>
    </citation>
    <scope>FUNCTION</scope>
    <scope>MUTAGENESIS OF PRO-420</scope>
</reference>
<reference key="6">
    <citation type="journal article" date="2011" name="Proc. Natl. Acad. Sci. U.S.A.">
        <title>Plastid gene expression and plant development require a plastidic protein of the mitochondrial transcription termination factor family.</title>
        <authorList>
            <person name="Babiychuk E."/>
            <person name="Vandepoele K."/>
            <person name="Wissing J."/>
            <person name="Garcia-Diaz M."/>
            <person name="De Rycke R."/>
            <person name="Akbari H."/>
            <person name="Joubes J."/>
            <person name="Beeckman T."/>
            <person name="Jaensch L."/>
            <person name="Frentzen M."/>
            <person name="Van Montagu M.C."/>
            <person name="Kushnir S."/>
        </authorList>
    </citation>
    <scope>FUNCTION</scope>
    <scope>SUBCELLULAR LOCATION</scope>
    <scope>DISRUPTION PHENOTYPE</scope>
</reference>
<reference key="7">
    <citation type="journal article" date="2012" name="Front. Plant Sci.">
        <title>Arabidopsis thaliana mTERF proteins: evolution and functional classification.</title>
        <authorList>
            <person name="Kleine T."/>
        </authorList>
    </citation>
    <scope>GENE FAMILY</scope>
</reference>
<feature type="transit peptide" description="Chloroplast" evidence="1">
    <location>
        <begin position="1"/>
        <end position="45"/>
    </location>
</feature>
<feature type="chain" id="PRO_0000436197" description="Transcription termination factor MTERF4, chloroplastic">
    <location>
        <begin position="46"/>
        <end position="541"/>
    </location>
</feature>
<feature type="region of interest" description="Disordered" evidence="2">
    <location>
        <begin position="66"/>
        <end position="103"/>
    </location>
</feature>
<feature type="region of interest" description="Disordered" evidence="2">
    <location>
        <begin position="503"/>
        <end position="541"/>
    </location>
</feature>
<feature type="compositionally biased region" description="Basic and acidic residues" evidence="2">
    <location>
        <begin position="85"/>
        <end position="99"/>
    </location>
</feature>
<feature type="compositionally biased region" description="Polar residues" evidence="2">
    <location>
        <begin position="507"/>
        <end position="517"/>
    </location>
</feature>
<feature type="compositionally biased region" description="Acidic residues" evidence="2">
    <location>
        <begin position="521"/>
        <end position="541"/>
    </location>
</feature>
<feature type="mutagenesis site" description="In rug2-1; variegated leaves, reduced growth and altered development of chloroplasts and mitochondria." evidence="4">
    <original>P</original>
    <variation>L</variation>
    <location>
        <position position="420"/>
    </location>
</feature>
<dbReference type="EMBL" id="AF069442">
    <property type="protein sequence ID" value="AAC79107.1"/>
    <property type="molecule type" value="Genomic_DNA"/>
</dbReference>
<dbReference type="EMBL" id="AL161495">
    <property type="protein sequence ID" value="CAB77784.1"/>
    <property type="molecule type" value="Genomic_DNA"/>
</dbReference>
<dbReference type="EMBL" id="CP002687">
    <property type="protein sequence ID" value="AEE82257.1"/>
    <property type="molecule type" value="Genomic_DNA"/>
</dbReference>
<dbReference type="EMBL" id="CP002687">
    <property type="protein sequence ID" value="ANM67864.1"/>
    <property type="molecule type" value="Genomic_DNA"/>
</dbReference>
<dbReference type="EMBL" id="BX827924">
    <property type="status" value="NOT_ANNOTATED_CDS"/>
    <property type="molecule type" value="mRNA"/>
</dbReference>
<dbReference type="EMBL" id="AF378901">
    <property type="protein sequence ID" value="AAK55704.1"/>
    <property type="status" value="ALT_INIT"/>
    <property type="molecule type" value="mRNA"/>
</dbReference>
<dbReference type="EMBL" id="AY052742">
    <property type="protein sequence ID" value="AAK96456.1"/>
    <property type="molecule type" value="mRNA"/>
</dbReference>
<dbReference type="PIR" id="T01394">
    <property type="entry name" value="T01394"/>
</dbReference>
<dbReference type="RefSeq" id="NP_001329662.1">
    <property type="nucleotide sequence ID" value="NM_001340410.1"/>
</dbReference>
<dbReference type="RefSeq" id="NP_192208.1">
    <property type="nucleotide sequence ID" value="NM_116533.3"/>
</dbReference>
<dbReference type="SMR" id="Q9ZT96"/>
<dbReference type="FunCoup" id="Q9ZT96">
    <property type="interactions" value="1631"/>
</dbReference>
<dbReference type="IntAct" id="Q9ZT96">
    <property type="interactions" value="2"/>
</dbReference>
<dbReference type="STRING" id="3702.Q9ZT96"/>
<dbReference type="iPTMnet" id="Q9ZT96"/>
<dbReference type="PaxDb" id="3702-AT4G02990.1"/>
<dbReference type="ProteomicsDB" id="250809"/>
<dbReference type="EnsemblPlants" id="AT4G02990.1">
    <property type="protein sequence ID" value="AT4G02990.1"/>
    <property type="gene ID" value="AT4G02990"/>
</dbReference>
<dbReference type="EnsemblPlants" id="AT4G02990.2">
    <property type="protein sequence ID" value="AT4G02990.2"/>
    <property type="gene ID" value="AT4G02990"/>
</dbReference>
<dbReference type="GeneID" id="828116"/>
<dbReference type="Gramene" id="AT4G02990.1">
    <property type="protein sequence ID" value="AT4G02990.1"/>
    <property type="gene ID" value="AT4G02990"/>
</dbReference>
<dbReference type="Gramene" id="AT4G02990.2">
    <property type="protein sequence ID" value="AT4G02990.2"/>
    <property type="gene ID" value="AT4G02990"/>
</dbReference>
<dbReference type="KEGG" id="ath:AT4G02990"/>
<dbReference type="Araport" id="AT4G02990"/>
<dbReference type="TAIR" id="AT4G02990">
    <property type="gene designation" value="BSM"/>
</dbReference>
<dbReference type="eggNOG" id="KOG1267">
    <property type="taxonomic scope" value="Eukaryota"/>
</dbReference>
<dbReference type="HOGENOM" id="CLU_024229_1_1_1"/>
<dbReference type="InParanoid" id="Q9ZT96"/>
<dbReference type="OMA" id="RMDYDTI"/>
<dbReference type="PhylomeDB" id="Q9ZT96"/>
<dbReference type="PRO" id="PR:Q9ZT96"/>
<dbReference type="Proteomes" id="UP000006548">
    <property type="component" value="Chromosome 4"/>
</dbReference>
<dbReference type="ExpressionAtlas" id="Q9ZT96">
    <property type="expression patterns" value="baseline and differential"/>
</dbReference>
<dbReference type="GO" id="GO:0009507">
    <property type="term" value="C:chloroplast"/>
    <property type="evidence" value="ECO:0007669"/>
    <property type="project" value="UniProtKB-SubCell"/>
</dbReference>
<dbReference type="GO" id="GO:0005739">
    <property type="term" value="C:mitochondrion"/>
    <property type="evidence" value="ECO:0007669"/>
    <property type="project" value="UniProtKB-SubCell"/>
</dbReference>
<dbReference type="GO" id="GO:0009536">
    <property type="term" value="C:plastid"/>
    <property type="evidence" value="ECO:0000314"/>
    <property type="project" value="TAIR"/>
</dbReference>
<dbReference type="GO" id="GO:0003690">
    <property type="term" value="F:double-stranded DNA binding"/>
    <property type="evidence" value="ECO:0007669"/>
    <property type="project" value="InterPro"/>
</dbReference>
<dbReference type="GO" id="GO:0003729">
    <property type="term" value="F:mRNA binding"/>
    <property type="evidence" value="ECO:0000314"/>
    <property type="project" value="TAIR"/>
</dbReference>
<dbReference type="GO" id="GO:0032502">
    <property type="term" value="P:developmental process"/>
    <property type="evidence" value="ECO:0000315"/>
    <property type="project" value="TAIR"/>
</dbReference>
<dbReference type="GO" id="GO:0006353">
    <property type="term" value="P:DNA-templated transcription termination"/>
    <property type="evidence" value="ECO:0007669"/>
    <property type="project" value="UniProtKB-KW"/>
</dbReference>
<dbReference type="GO" id="GO:0009793">
    <property type="term" value="P:embryo development ending in seed dormancy"/>
    <property type="evidence" value="ECO:0000315"/>
    <property type="project" value="TAIR"/>
</dbReference>
<dbReference type="GO" id="GO:0042794">
    <property type="term" value="P:plastid rRNA transcription"/>
    <property type="evidence" value="ECO:0000315"/>
    <property type="project" value="TAIR"/>
</dbReference>
<dbReference type="GO" id="GO:0042793">
    <property type="term" value="P:plastid transcription"/>
    <property type="evidence" value="ECO:0000315"/>
    <property type="project" value="TAIR"/>
</dbReference>
<dbReference type="GO" id="GO:0006355">
    <property type="term" value="P:regulation of DNA-templated transcription"/>
    <property type="evidence" value="ECO:0007669"/>
    <property type="project" value="InterPro"/>
</dbReference>
<dbReference type="GO" id="GO:0008380">
    <property type="term" value="P:RNA splicing"/>
    <property type="evidence" value="ECO:0000315"/>
    <property type="project" value="TAIR"/>
</dbReference>
<dbReference type="FunFam" id="1.25.70.10:FF:000005">
    <property type="entry name" value="Transcription termination factor MTERF4, chloroplastic"/>
    <property type="match status" value="1"/>
</dbReference>
<dbReference type="FunFam" id="1.25.70.10:FF:000004">
    <property type="entry name" value="Transcription termination factor mterf4, chloroplastic"/>
    <property type="match status" value="1"/>
</dbReference>
<dbReference type="Gene3D" id="1.25.70.10">
    <property type="entry name" value="Transcription termination factor 3, mitochondrial"/>
    <property type="match status" value="1"/>
</dbReference>
<dbReference type="InterPro" id="IPR003690">
    <property type="entry name" value="MTERF"/>
</dbReference>
<dbReference type="InterPro" id="IPR038538">
    <property type="entry name" value="MTERF_sf"/>
</dbReference>
<dbReference type="PANTHER" id="PTHR13068">
    <property type="entry name" value="CGI-12 PROTEIN-RELATED"/>
    <property type="match status" value="1"/>
</dbReference>
<dbReference type="PANTHER" id="PTHR13068:SF109">
    <property type="entry name" value="TRANSCRIPTION TERMINATION FACTOR MTERF4, CHLOROPLASTIC"/>
    <property type="match status" value="1"/>
</dbReference>
<dbReference type="Pfam" id="PF02536">
    <property type="entry name" value="mTERF"/>
    <property type="match status" value="1"/>
</dbReference>
<dbReference type="SMART" id="SM00733">
    <property type="entry name" value="Mterf"/>
    <property type="match status" value="10"/>
</dbReference>
<name>MTEF4_ARATH</name>
<organism>
    <name type="scientific">Arabidopsis thaliana</name>
    <name type="common">Mouse-ear cress</name>
    <dbReference type="NCBI Taxonomy" id="3702"/>
    <lineage>
        <taxon>Eukaryota</taxon>
        <taxon>Viridiplantae</taxon>
        <taxon>Streptophyta</taxon>
        <taxon>Embryophyta</taxon>
        <taxon>Tracheophyta</taxon>
        <taxon>Spermatophyta</taxon>
        <taxon>Magnoliopsida</taxon>
        <taxon>eudicotyledons</taxon>
        <taxon>Gunneridae</taxon>
        <taxon>Pentapetalae</taxon>
        <taxon>rosids</taxon>
        <taxon>malvids</taxon>
        <taxon>Brassicales</taxon>
        <taxon>Brassicaceae</taxon>
        <taxon>Camelineae</taxon>
        <taxon>Arabidopsis</taxon>
    </lineage>
</organism>
<keyword id="KW-0150">Chloroplast</keyword>
<keyword id="KW-0496">Mitochondrion</keyword>
<keyword id="KW-0934">Plastid</keyword>
<keyword id="KW-1185">Reference proteome</keyword>
<keyword id="KW-0804">Transcription</keyword>
<keyword id="KW-0805">Transcription regulation</keyword>
<keyword id="KW-0806">Transcription termination</keyword>
<keyword id="KW-0809">Transit peptide</keyword>
<protein>
    <recommendedName>
        <fullName evidence="8">Transcription termination factor MTERF4, chloroplastic</fullName>
    </recommendedName>
    <alternativeName>
        <fullName evidence="7">Mitochondrial transcription termination factor 4</fullName>
    </alternativeName>
    <alternativeName>
        <fullName evidence="5">Protein BELAYA SMERT'</fullName>
    </alternativeName>
    <alternativeName>
        <fullName evidence="6">Protein RUGOSA2</fullName>
    </alternativeName>
</protein>
<evidence type="ECO:0000255" key="1"/>
<evidence type="ECO:0000256" key="2">
    <source>
        <dbReference type="SAM" id="MobiDB-lite"/>
    </source>
</evidence>
<evidence type="ECO:0000269" key="3">
    <source>
    </source>
</evidence>
<evidence type="ECO:0000269" key="4">
    <source>
    </source>
</evidence>
<evidence type="ECO:0000303" key="5">
    <source>
    </source>
</evidence>
<evidence type="ECO:0000303" key="6">
    <source>
    </source>
</evidence>
<evidence type="ECO:0000303" key="7">
    <source>
    </source>
</evidence>
<evidence type="ECO:0000305" key="8"/>
<evidence type="ECO:0000312" key="9">
    <source>
        <dbReference type="Araport" id="AT4G02990"/>
    </source>
</evidence>
<evidence type="ECO:0000312" key="10">
    <source>
        <dbReference type="EMBL" id="AAC79107.1"/>
    </source>
</evidence>
<proteinExistence type="evidence at protein level"/>
<sequence>MKIRFCNGFTKPGFLLVHFEPPSFFAVRSRSLSDSTYGNLCNHKKRPGTGIGLTVQCAIANRRFSSRSLDSPRRERSSRSSSSSGRDRDRDKDKGRDSKSLYSRPSLLDMNKEKAANRAKVYEFLRGIGIVPDELDGLELPVTADVMKERVEFLHKLGLTIEDINNYPLVLGCSVKKNMVPVLDYLGKLGVRKSTFTEFLRRYPQVLHSSVVIDLAPVVKYLQGLDIKPSDVPRVLERYPEVLGFKLEGTMSTSVAYLVGIGVARREIGGILTRYPEILGMRVARIIKPLVEYLEVLGIPRLAAARLIEKRPHILGFELDDTVKPNVQILQDFNVRETSLPSIIAQYPEIIGIDLKPKLDTQRKLLCSAIHLNPEDLGSLIERMPQFVSLSESPMLKHIDFLTKCGFSIDQTREMVIGCPQVLALNLGIMKLSFEYFQKEMKRPLQDLVDFPAFFTYGLESTVKPRHKKIIKKGIKCSLAWMLNCSDEKFEQRMSYDTIDIEEVETDPSSFDMNTLMQPEREEESDSEYEEEEDDDDEEFA</sequence>
<gene>
    <name evidence="7" type="primary">MTERF4</name>
    <name evidence="5" type="synonym">BSM</name>
    <name evidence="6" type="synonym">RUG2</name>
    <name evidence="5" type="synonym">TERF3</name>
    <name evidence="9" type="ordered locus">At4g02990</name>
    <name evidence="10" type="ORF">T4I9.13</name>
</gene>
<accession>Q9ZT96</accession>
<accession>Q93WJ2</accession>
<comment type="function">
    <text evidence="3">Transcription termination factor required for processing and steady-state levels of plastid transcripts. Required for splicing of the chloroplastic Clp protease (ClpP) group IIa intron. Required for maturation of 16S rRNA and 23S rRNA in the chloroplast. Essential for embryogenesis (PubMed:21464319). Required for the maintenance of the correct levels of transcripts in the mitochondria and chloroplasts.</text>
</comment>
<comment type="subcellular location">
    <subcellularLocation>
        <location evidence="3 4">Plastid</location>
        <location evidence="3 4">Chloroplast</location>
    </subcellularLocation>
    <subcellularLocation>
        <location evidence="4">Mitochondrion</location>
    </subcellularLocation>
</comment>
<comment type="disruption phenotype">
    <text evidence="3">Embryonic lethality when homozygous, due to growth arrest at the late globular stage.</text>
</comment>
<comment type="miscellaneous">
    <text evidence="5">'BELAYA SMERT' means white death in Russian.</text>
</comment>
<comment type="similarity">
    <text evidence="8">Belongs to the mTERF family.</text>
</comment>
<comment type="sequence caution" evidence="8">
    <conflict type="erroneous initiation">
        <sequence resource="EMBL-CDS" id="AAK55704"/>
    </conflict>
    <text>Truncated N-terminus.</text>
</comment>
<comment type="sequence caution" evidence="8">
    <conflict type="miscellaneous discrepancy">
        <sequence resource="EMBL" id="BX827924"/>
    </conflict>
    <text>Sequencing errors.</text>
</comment>